<reference key="1">
    <citation type="journal article" date="2004" name="Nat. Biotechnol.">
        <title>Complete genome sequence of the metabolically versatile photosynthetic bacterium Rhodopseudomonas palustris.</title>
        <authorList>
            <person name="Larimer F.W."/>
            <person name="Chain P."/>
            <person name="Hauser L."/>
            <person name="Lamerdin J.E."/>
            <person name="Malfatti S."/>
            <person name="Do L."/>
            <person name="Land M.L."/>
            <person name="Pelletier D.A."/>
            <person name="Beatty J.T."/>
            <person name="Lang A.S."/>
            <person name="Tabita F.R."/>
            <person name="Gibson J.L."/>
            <person name="Hanson T.E."/>
            <person name="Bobst C."/>
            <person name="Torres y Torres J.L."/>
            <person name="Peres C."/>
            <person name="Harrison F.H."/>
            <person name="Gibson J."/>
            <person name="Harwood C.S."/>
        </authorList>
    </citation>
    <scope>NUCLEOTIDE SEQUENCE [LARGE SCALE GENOMIC DNA]</scope>
    <source>
        <strain>ATCC BAA-98 / CGA009</strain>
    </source>
</reference>
<accession>P61727</accession>
<comment type="function">
    <text evidence="1">Catalyzes the formation of 6,7-dimethyl-8-ribityllumazine by condensation of 5-amino-6-(D-ribitylamino)uracil with 3,4-dihydroxy-2-butanone 4-phosphate. This is the penultimate step in the biosynthesis of riboflavin.</text>
</comment>
<comment type="catalytic activity">
    <reaction evidence="1">
        <text>(2S)-2-hydroxy-3-oxobutyl phosphate + 5-amino-6-(D-ribitylamino)uracil = 6,7-dimethyl-8-(1-D-ribityl)lumazine + phosphate + 2 H2O + H(+)</text>
        <dbReference type="Rhea" id="RHEA:26152"/>
        <dbReference type="ChEBI" id="CHEBI:15377"/>
        <dbReference type="ChEBI" id="CHEBI:15378"/>
        <dbReference type="ChEBI" id="CHEBI:15934"/>
        <dbReference type="ChEBI" id="CHEBI:43474"/>
        <dbReference type="ChEBI" id="CHEBI:58201"/>
        <dbReference type="ChEBI" id="CHEBI:58830"/>
        <dbReference type="EC" id="2.5.1.78"/>
    </reaction>
</comment>
<comment type="pathway">
    <text evidence="1">Cofactor biosynthesis; riboflavin biosynthesis; riboflavin from 2-hydroxy-3-oxobutyl phosphate and 5-amino-6-(D-ribitylamino)uracil: step 1/2.</text>
</comment>
<comment type="similarity">
    <text evidence="1">Belongs to the DMRL synthase family.</text>
</comment>
<feature type="chain" id="PRO_0000134799" description="6,7-dimethyl-8-ribityllumazine synthase 2">
    <location>
        <begin position="1"/>
        <end position="181"/>
    </location>
</feature>
<feature type="region of interest" description="Disordered" evidence="2">
    <location>
        <begin position="1"/>
        <end position="23"/>
    </location>
</feature>
<feature type="binding site" evidence="1">
    <location>
        <position position="40"/>
    </location>
    <ligand>
        <name>5-amino-6-(D-ribitylamino)uracil</name>
        <dbReference type="ChEBI" id="CHEBI:15934"/>
    </ligand>
</feature>
<feature type="binding site" evidence="1">
    <location>
        <begin position="74"/>
        <end position="76"/>
    </location>
    <ligand>
        <name>5-amino-6-(D-ribitylamino)uracil</name>
        <dbReference type="ChEBI" id="CHEBI:15934"/>
    </ligand>
</feature>
<feature type="binding site" evidence="1">
    <location>
        <begin position="98"/>
        <end position="100"/>
    </location>
    <ligand>
        <name>5-amino-6-(D-ribitylamino)uracil</name>
        <dbReference type="ChEBI" id="CHEBI:15934"/>
    </ligand>
</feature>
<feature type="binding site" evidence="1">
    <location>
        <position position="129"/>
    </location>
    <ligand>
        <name>5-amino-6-(D-ribitylamino)uracil</name>
        <dbReference type="ChEBI" id="CHEBI:15934"/>
    </ligand>
</feature>
<gene>
    <name evidence="1" type="primary">ribH2</name>
    <name type="ordered locus">RPA4363</name>
</gene>
<keyword id="KW-0686">Riboflavin biosynthesis</keyword>
<keyword id="KW-0808">Transferase</keyword>
<sequence length="181" mass="19760">MSLPMTETVTDPAETAPPTAERSYPRFAKPQRVAFVQSSWHRDVVAGCWESFVREIVERGIVASQVDLFEVPGSFEIPLHVQMLAKTRRYTAIVAAGLVVDDGLTGFVAQTVIQALMDVQLKTEVPVFSAVATPHSFERGSPNTEHFRQHFATKGADVAHACADTLLSLERLRGQVAAGIV</sequence>
<evidence type="ECO:0000255" key="1">
    <source>
        <dbReference type="HAMAP-Rule" id="MF_00178"/>
    </source>
</evidence>
<evidence type="ECO:0000256" key="2">
    <source>
        <dbReference type="SAM" id="MobiDB-lite"/>
    </source>
</evidence>
<proteinExistence type="inferred from homology"/>
<name>RISB2_RHOPA</name>
<dbReference type="EC" id="2.5.1.78" evidence="1"/>
<dbReference type="EMBL" id="BX572607">
    <property type="protein sequence ID" value="CAE29804.1"/>
    <property type="molecule type" value="Genomic_DNA"/>
</dbReference>
<dbReference type="SMR" id="P61727"/>
<dbReference type="STRING" id="258594.RPA4363"/>
<dbReference type="eggNOG" id="COG0054">
    <property type="taxonomic scope" value="Bacteria"/>
</dbReference>
<dbReference type="HOGENOM" id="CLU_089358_0_0_5"/>
<dbReference type="PhylomeDB" id="P61727"/>
<dbReference type="UniPathway" id="UPA00275">
    <property type="reaction ID" value="UER00404"/>
</dbReference>
<dbReference type="GO" id="GO:0005829">
    <property type="term" value="C:cytosol"/>
    <property type="evidence" value="ECO:0007669"/>
    <property type="project" value="TreeGrafter"/>
</dbReference>
<dbReference type="GO" id="GO:0009349">
    <property type="term" value="C:riboflavin synthase complex"/>
    <property type="evidence" value="ECO:0007669"/>
    <property type="project" value="InterPro"/>
</dbReference>
<dbReference type="GO" id="GO:0000906">
    <property type="term" value="F:6,7-dimethyl-8-ribityllumazine synthase activity"/>
    <property type="evidence" value="ECO:0007669"/>
    <property type="project" value="UniProtKB-UniRule"/>
</dbReference>
<dbReference type="GO" id="GO:0009231">
    <property type="term" value="P:riboflavin biosynthetic process"/>
    <property type="evidence" value="ECO:0007669"/>
    <property type="project" value="UniProtKB-UniRule"/>
</dbReference>
<dbReference type="Gene3D" id="3.40.50.960">
    <property type="entry name" value="Lumazine/riboflavin synthase"/>
    <property type="match status" value="1"/>
</dbReference>
<dbReference type="HAMAP" id="MF_00178">
    <property type="entry name" value="Lumazine_synth"/>
    <property type="match status" value="1"/>
</dbReference>
<dbReference type="InterPro" id="IPR034964">
    <property type="entry name" value="LS"/>
</dbReference>
<dbReference type="InterPro" id="IPR002180">
    <property type="entry name" value="LS/RS"/>
</dbReference>
<dbReference type="InterPro" id="IPR036467">
    <property type="entry name" value="LS/RS_sf"/>
</dbReference>
<dbReference type="NCBIfam" id="NF009084">
    <property type="entry name" value="PRK12419.1"/>
    <property type="match status" value="1"/>
</dbReference>
<dbReference type="PANTHER" id="PTHR21058:SF0">
    <property type="entry name" value="6,7-DIMETHYL-8-RIBITYLLUMAZINE SYNTHASE"/>
    <property type="match status" value="1"/>
</dbReference>
<dbReference type="PANTHER" id="PTHR21058">
    <property type="entry name" value="6,7-DIMETHYL-8-RIBITYLLUMAZINE SYNTHASE DMRL SYNTHASE LUMAZINE SYNTHASE"/>
    <property type="match status" value="1"/>
</dbReference>
<dbReference type="Pfam" id="PF00885">
    <property type="entry name" value="DMRL_synthase"/>
    <property type="match status" value="1"/>
</dbReference>
<dbReference type="SUPFAM" id="SSF52121">
    <property type="entry name" value="Lumazine synthase"/>
    <property type="match status" value="1"/>
</dbReference>
<organism>
    <name type="scientific">Rhodopseudomonas palustris (strain ATCC BAA-98 / CGA009)</name>
    <dbReference type="NCBI Taxonomy" id="258594"/>
    <lineage>
        <taxon>Bacteria</taxon>
        <taxon>Pseudomonadati</taxon>
        <taxon>Pseudomonadota</taxon>
        <taxon>Alphaproteobacteria</taxon>
        <taxon>Hyphomicrobiales</taxon>
        <taxon>Nitrobacteraceae</taxon>
        <taxon>Rhodopseudomonas</taxon>
    </lineage>
</organism>
<protein>
    <recommendedName>
        <fullName evidence="1">6,7-dimethyl-8-ribityllumazine synthase 2</fullName>
        <shortName evidence="1">DMRL synthase 2</shortName>
        <shortName evidence="1">LS 2</shortName>
        <shortName evidence="1">Lumazine synthase 2</shortName>
        <ecNumber evidence="1">2.5.1.78</ecNumber>
    </recommendedName>
</protein>